<reference key="1">
    <citation type="journal article" date="2010" name="J. Bacteriol.">
        <title>Genome sequence of the deep-rooted Yersinia pestis strain Angola reveals new insights into the evolution and pangenome of the plague bacterium.</title>
        <authorList>
            <person name="Eppinger M."/>
            <person name="Worsham P.L."/>
            <person name="Nikolich M.P."/>
            <person name="Riley D.R."/>
            <person name="Sebastian Y."/>
            <person name="Mou S."/>
            <person name="Achtman M."/>
            <person name="Lindler L.E."/>
            <person name="Ravel J."/>
        </authorList>
    </citation>
    <scope>NUCLEOTIDE SEQUENCE [LARGE SCALE GENOMIC DNA]</scope>
    <source>
        <strain>Angola</strain>
    </source>
</reference>
<dbReference type="EMBL" id="CP000901">
    <property type="protein sequence ID" value="ABX87128.1"/>
    <property type="molecule type" value="Genomic_DNA"/>
</dbReference>
<dbReference type="RefSeq" id="WP_002209635.1">
    <property type="nucleotide sequence ID" value="NZ_CP009935.1"/>
</dbReference>
<dbReference type="SMR" id="A9R4H1"/>
<dbReference type="GeneID" id="57974634"/>
<dbReference type="KEGG" id="ypg:YpAngola_A3794"/>
<dbReference type="PATRIC" id="fig|349746.12.peg.507"/>
<dbReference type="GO" id="GO:0005737">
    <property type="term" value="C:cytoplasm"/>
    <property type="evidence" value="ECO:0007669"/>
    <property type="project" value="UniProtKB-SubCell"/>
</dbReference>
<dbReference type="GO" id="GO:0050821">
    <property type="term" value="P:protein stabilization"/>
    <property type="evidence" value="ECO:0007669"/>
    <property type="project" value="UniProtKB-UniRule"/>
</dbReference>
<dbReference type="CDD" id="cd06470">
    <property type="entry name" value="ACD_IbpA-B_like"/>
    <property type="match status" value="1"/>
</dbReference>
<dbReference type="Gene3D" id="2.60.40.790">
    <property type="match status" value="1"/>
</dbReference>
<dbReference type="HAMAP" id="MF_02001">
    <property type="entry name" value="HSP20_IbpB"/>
    <property type="match status" value="1"/>
</dbReference>
<dbReference type="InterPro" id="IPR002068">
    <property type="entry name" value="A-crystallin/Hsp20_dom"/>
</dbReference>
<dbReference type="InterPro" id="IPR037913">
    <property type="entry name" value="ACD_IbpA/B"/>
</dbReference>
<dbReference type="InterPro" id="IPR008978">
    <property type="entry name" value="HSP20-like_chaperone"/>
</dbReference>
<dbReference type="InterPro" id="IPR022848">
    <property type="entry name" value="HSP20_IbpB"/>
</dbReference>
<dbReference type="NCBIfam" id="NF008618">
    <property type="entry name" value="PRK11597.1"/>
    <property type="match status" value="1"/>
</dbReference>
<dbReference type="PANTHER" id="PTHR47062">
    <property type="match status" value="1"/>
</dbReference>
<dbReference type="PANTHER" id="PTHR47062:SF2">
    <property type="entry name" value="SMALL HEAT SHOCK PROTEIN IBPB"/>
    <property type="match status" value="1"/>
</dbReference>
<dbReference type="Pfam" id="PF00011">
    <property type="entry name" value="HSP20"/>
    <property type="match status" value="1"/>
</dbReference>
<dbReference type="SUPFAM" id="SSF49764">
    <property type="entry name" value="HSP20-like chaperones"/>
    <property type="match status" value="1"/>
</dbReference>
<dbReference type="PROSITE" id="PS01031">
    <property type="entry name" value="SHSP"/>
    <property type="match status" value="1"/>
</dbReference>
<name>IBPB_YERPG</name>
<evidence type="ECO:0000255" key="1">
    <source>
        <dbReference type="HAMAP-Rule" id="MF_02001"/>
    </source>
</evidence>
<evidence type="ECO:0000255" key="2">
    <source>
        <dbReference type="PROSITE-ProRule" id="PRU00285"/>
    </source>
</evidence>
<sequence length="154" mass="17489">MRNYDLSPLLRQWIGFDKLASTMQGGQEPQGFPPYNIEKTDDNHYRISLALAGFKQSELDIEVEGPRLTVRGKPTPVEKQVEYLHQGLVRKEFSLTFTLAEHLNVDNAQFENGLLHIDLLRQVPEALQPQRIAIGSATPQERQVLESPEAPDQQ</sequence>
<comment type="function">
    <text evidence="1">Associates with aggregated proteins, together with IbpA, to stabilize and protect them from irreversible denaturation and extensive proteolysis during heat shock and oxidative stress. Aggregated proteins bound to the IbpAB complex are more efficiently refolded and reactivated by the ATP-dependent chaperone systems ClpB and DnaK/DnaJ/GrpE. Its activity is ATP-independent.</text>
</comment>
<comment type="subunit">
    <text evidence="1">Homodimer. Forms homomultimers of about 100-150 subunits at optimal growth temperatures. Conformation changes to oligomers at high temperatures or high ionic concentrations. The decrease in size of the multimers is accompanied by an increase in chaperone activity.</text>
</comment>
<comment type="subcellular location">
    <subcellularLocation>
        <location evidence="1">Cytoplasm</location>
    </subcellularLocation>
</comment>
<comment type="domain">
    <text evidence="1">The N- and C-terminal flexible termini are involved in oligomerization and in the binding of non-native substrate proteins, and are essential for chaperone activity.</text>
</comment>
<comment type="similarity">
    <text evidence="1 2">Belongs to the small heat shock protein (HSP20) family.</text>
</comment>
<accession>A9R4H1</accession>
<feature type="chain" id="PRO_1000189116" description="Small heat shock protein IbpB">
    <location>
        <begin position="1"/>
        <end position="154"/>
    </location>
</feature>
<feature type="domain" description="sHSP" evidence="2">
    <location>
        <begin position="26"/>
        <end position="137"/>
    </location>
</feature>
<organism>
    <name type="scientific">Yersinia pestis bv. Antiqua (strain Angola)</name>
    <dbReference type="NCBI Taxonomy" id="349746"/>
    <lineage>
        <taxon>Bacteria</taxon>
        <taxon>Pseudomonadati</taxon>
        <taxon>Pseudomonadota</taxon>
        <taxon>Gammaproteobacteria</taxon>
        <taxon>Enterobacterales</taxon>
        <taxon>Yersiniaceae</taxon>
        <taxon>Yersinia</taxon>
    </lineage>
</organism>
<gene>
    <name evidence="1" type="primary">ibpB</name>
    <name type="ordered locus">YpAngola_A3794</name>
</gene>
<keyword id="KW-0143">Chaperone</keyword>
<keyword id="KW-0963">Cytoplasm</keyword>
<keyword id="KW-0346">Stress response</keyword>
<protein>
    <recommendedName>
        <fullName evidence="1">Small heat shock protein IbpB</fullName>
    </recommendedName>
    <alternativeName>
        <fullName evidence="1">16 kDa heat shock protein B</fullName>
    </alternativeName>
</protein>
<proteinExistence type="inferred from homology"/>